<evidence type="ECO:0000255" key="1">
    <source>
        <dbReference type="PROSITE-ProRule" id="PRU00981"/>
    </source>
</evidence>
<evidence type="ECO:0000305" key="2"/>
<evidence type="ECO:0000312" key="3">
    <source>
        <dbReference type="Araport" id="AT1G10586"/>
    </source>
</evidence>
<evidence type="ECO:0000312" key="4">
    <source>
        <dbReference type="EMBL" id="AAD39583.1"/>
    </source>
</evidence>
<gene>
    <name evidence="2" type="primary">BHLH168</name>
    <name evidence="3" type="ordered locus">At1g10586</name>
    <name evidence="4" type="ORF">T10O24.23</name>
</gene>
<reference key="1">
    <citation type="journal article" date="2000" name="Nature">
        <title>Sequence and analysis of chromosome 1 of the plant Arabidopsis thaliana.</title>
        <authorList>
            <person name="Theologis A."/>
            <person name="Ecker J.R."/>
            <person name="Palm C.J."/>
            <person name="Federspiel N.A."/>
            <person name="Kaul S."/>
            <person name="White O."/>
            <person name="Alonso J."/>
            <person name="Altafi H."/>
            <person name="Araujo R."/>
            <person name="Bowman C.L."/>
            <person name="Brooks S.Y."/>
            <person name="Buehler E."/>
            <person name="Chan A."/>
            <person name="Chao Q."/>
            <person name="Chen H."/>
            <person name="Cheuk R.F."/>
            <person name="Chin C.W."/>
            <person name="Chung M.K."/>
            <person name="Conn L."/>
            <person name="Conway A.B."/>
            <person name="Conway A.R."/>
            <person name="Creasy T.H."/>
            <person name="Dewar K."/>
            <person name="Dunn P."/>
            <person name="Etgu P."/>
            <person name="Feldblyum T.V."/>
            <person name="Feng J.-D."/>
            <person name="Fong B."/>
            <person name="Fujii C.Y."/>
            <person name="Gill J.E."/>
            <person name="Goldsmith A.D."/>
            <person name="Haas B."/>
            <person name="Hansen N.F."/>
            <person name="Hughes B."/>
            <person name="Huizar L."/>
            <person name="Hunter J.L."/>
            <person name="Jenkins J."/>
            <person name="Johnson-Hopson C."/>
            <person name="Khan S."/>
            <person name="Khaykin E."/>
            <person name="Kim C.J."/>
            <person name="Koo H.L."/>
            <person name="Kremenetskaia I."/>
            <person name="Kurtz D.B."/>
            <person name="Kwan A."/>
            <person name="Lam B."/>
            <person name="Langin-Hooper S."/>
            <person name="Lee A."/>
            <person name="Lee J.M."/>
            <person name="Lenz C.A."/>
            <person name="Li J.H."/>
            <person name="Li Y.-P."/>
            <person name="Lin X."/>
            <person name="Liu S.X."/>
            <person name="Liu Z.A."/>
            <person name="Luros J.S."/>
            <person name="Maiti R."/>
            <person name="Marziali A."/>
            <person name="Militscher J."/>
            <person name="Miranda M."/>
            <person name="Nguyen M."/>
            <person name="Nierman W.C."/>
            <person name="Osborne B.I."/>
            <person name="Pai G."/>
            <person name="Peterson J."/>
            <person name="Pham P.K."/>
            <person name="Rizzo M."/>
            <person name="Rooney T."/>
            <person name="Rowley D."/>
            <person name="Sakano H."/>
            <person name="Salzberg S.L."/>
            <person name="Schwartz J.R."/>
            <person name="Shinn P."/>
            <person name="Southwick A.M."/>
            <person name="Sun H."/>
            <person name="Tallon L.J."/>
            <person name="Tambunga G."/>
            <person name="Toriumi M.J."/>
            <person name="Town C.D."/>
            <person name="Utterback T."/>
            <person name="Van Aken S."/>
            <person name="Vaysberg M."/>
            <person name="Vysotskaia V.S."/>
            <person name="Walker M."/>
            <person name="Wu D."/>
            <person name="Yu G."/>
            <person name="Fraser C.M."/>
            <person name="Venter J.C."/>
            <person name="Davis R.W."/>
        </authorList>
    </citation>
    <scope>NUCLEOTIDE SEQUENCE [LARGE SCALE GENOMIC DNA]</scope>
    <source>
        <strain>cv. Columbia</strain>
    </source>
</reference>
<reference key="2">
    <citation type="journal article" date="2017" name="Plant J.">
        <title>Araport11: a complete reannotation of the Arabidopsis thaliana reference genome.</title>
        <authorList>
            <person name="Cheng C.Y."/>
            <person name="Krishnakumar V."/>
            <person name="Chan A.P."/>
            <person name="Thibaud-Nissen F."/>
            <person name="Schobel S."/>
            <person name="Town C.D."/>
        </authorList>
    </citation>
    <scope>GENOME REANNOTATION</scope>
    <source>
        <strain>cv. Columbia</strain>
    </source>
</reference>
<dbReference type="EMBL" id="AC007067">
    <property type="protein sequence ID" value="AAD39583.1"/>
    <property type="molecule type" value="Genomic_DNA"/>
</dbReference>
<dbReference type="EMBL" id="CP002684">
    <property type="protein sequence ID" value="AEE28599.1"/>
    <property type="molecule type" value="Genomic_DNA"/>
</dbReference>
<dbReference type="PIR" id="D86239">
    <property type="entry name" value="D86239"/>
</dbReference>
<dbReference type="RefSeq" id="NP_001117258.1">
    <molecule id="Q9XIJ1-1"/>
    <property type="nucleotide sequence ID" value="NM_001123786.1"/>
</dbReference>
<dbReference type="SMR" id="Q9XIJ1"/>
<dbReference type="FunCoup" id="Q9XIJ1">
    <property type="interactions" value="82"/>
</dbReference>
<dbReference type="IntAct" id="Q9XIJ1">
    <property type="interactions" value="12"/>
</dbReference>
<dbReference type="STRING" id="3702.Q9XIJ1"/>
<dbReference type="PaxDb" id="3702-AT1G10586.1"/>
<dbReference type="EnsemblPlants" id="AT1G10586.1">
    <molecule id="Q9XIJ1-1"/>
    <property type="protein sequence ID" value="AT1G10586.1"/>
    <property type="gene ID" value="AT1G10586"/>
</dbReference>
<dbReference type="GeneID" id="6240488"/>
<dbReference type="Gramene" id="AT1G10586.1">
    <molecule id="Q9XIJ1-1"/>
    <property type="protein sequence ID" value="AT1G10586.1"/>
    <property type="gene ID" value="AT1G10586"/>
</dbReference>
<dbReference type="KEGG" id="ath:AT1G10586"/>
<dbReference type="Araport" id="AT1G10586"/>
<dbReference type="TAIR" id="AT1G10586"/>
<dbReference type="eggNOG" id="ENOG502STRJ">
    <property type="taxonomic scope" value="Eukaryota"/>
</dbReference>
<dbReference type="HOGENOM" id="CLU_083174_4_0_1"/>
<dbReference type="InParanoid" id="Q9XIJ1"/>
<dbReference type="OMA" id="YDIERIH"/>
<dbReference type="PhylomeDB" id="Q9XIJ1"/>
<dbReference type="PRO" id="PR:Q9XIJ1"/>
<dbReference type="Proteomes" id="UP000006548">
    <property type="component" value="Chromosome 1"/>
</dbReference>
<dbReference type="ExpressionAtlas" id="Q9XIJ1">
    <property type="expression patterns" value="baseline and differential"/>
</dbReference>
<dbReference type="GO" id="GO:0005634">
    <property type="term" value="C:nucleus"/>
    <property type="evidence" value="ECO:0007669"/>
    <property type="project" value="UniProtKB-SubCell"/>
</dbReference>
<dbReference type="GO" id="GO:0003677">
    <property type="term" value="F:DNA binding"/>
    <property type="evidence" value="ECO:0007669"/>
    <property type="project" value="UniProtKB-KW"/>
</dbReference>
<dbReference type="GO" id="GO:0003700">
    <property type="term" value="F:DNA-binding transcription factor activity"/>
    <property type="evidence" value="ECO:0007669"/>
    <property type="project" value="InterPro"/>
</dbReference>
<dbReference type="GO" id="GO:0046983">
    <property type="term" value="F:protein dimerization activity"/>
    <property type="evidence" value="ECO:0007669"/>
    <property type="project" value="InterPro"/>
</dbReference>
<dbReference type="GO" id="GO:0006357">
    <property type="term" value="P:regulation of transcription by RNA polymerase II"/>
    <property type="evidence" value="ECO:0007669"/>
    <property type="project" value="InterPro"/>
</dbReference>
<dbReference type="CDD" id="cd18914">
    <property type="entry name" value="bHLH_AtORG2_like"/>
    <property type="match status" value="1"/>
</dbReference>
<dbReference type="Gene3D" id="4.10.280.10">
    <property type="entry name" value="Helix-loop-helix DNA-binding domain"/>
    <property type="match status" value="1"/>
</dbReference>
<dbReference type="InterPro" id="IPR011598">
    <property type="entry name" value="bHLH_dom"/>
</dbReference>
<dbReference type="InterPro" id="IPR036638">
    <property type="entry name" value="HLH_DNA-bd_sf"/>
</dbReference>
<dbReference type="InterPro" id="IPR015660">
    <property type="entry name" value="MASH1/Ascl1a-like"/>
</dbReference>
<dbReference type="PANTHER" id="PTHR13935">
    <property type="entry name" value="ACHAETE-SCUTE TRANSCRIPTION FACTOR-RELATED"/>
    <property type="match status" value="1"/>
</dbReference>
<dbReference type="PANTHER" id="PTHR13935:SF46">
    <property type="entry name" value="TRANSCRIPTION FACTOR BHLH167-RELATED"/>
    <property type="match status" value="1"/>
</dbReference>
<dbReference type="Pfam" id="PF00010">
    <property type="entry name" value="HLH"/>
    <property type="match status" value="1"/>
</dbReference>
<dbReference type="SMART" id="SM00353">
    <property type="entry name" value="HLH"/>
    <property type="match status" value="1"/>
</dbReference>
<dbReference type="SUPFAM" id="SSF47459">
    <property type="entry name" value="HLH, helix-loop-helix DNA-binding domain"/>
    <property type="match status" value="1"/>
</dbReference>
<dbReference type="PROSITE" id="PS50888">
    <property type="entry name" value="BHLH"/>
    <property type="match status" value="1"/>
</dbReference>
<keyword id="KW-0025">Alternative splicing</keyword>
<keyword id="KW-0238">DNA-binding</keyword>
<keyword id="KW-0539">Nucleus</keyword>
<keyword id="KW-1185">Reference proteome</keyword>
<keyword id="KW-0804">Transcription</keyword>
<keyword id="KW-0805">Transcription regulation</keyword>
<organism>
    <name type="scientific">Arabidopsis thaliana</name>
    <name type="common">Mouse-ear cress</name>
    <dbReference type="NCBI Taxonomy" id="3702"/>
    <lineage>
        <taxon>Eukaryota</taxon>
        <taxon>Viridiplantae</taxon>
        <taxon>Streptophyta</taxon>
        <taxon>Embryophyta</taxon>
        <taxon>Tracheophyta</taxon>
        <taxon>Spermatophyta</taxon>
        <taxon>Magnoliopsida</taxon>
        <taxon>eudicotyledons</taxon>
        <taxon>Gunneridae</taxon>
        <taxon>Pentapetalae</taxon>
        <taxon>rosids</taxon>
        <taxon>malvids</taxon>
        <taxon>Brassicales</taxon>
        <taxon>Brassicaceae</taxon>
        <taxon>Camelineae</taxon>
        <taxon>Arabidopsis</taxon>
    </lineage>
</organism>
<name>BH168_ARATH</name>
<sequence>MERAREIGEGSASSLREQRNLREKERRMRMKHLFSILSSHVSPTRRLPVPQLIDQAVSYMIQLKEKVNYLNEMKRRMLGGEVKNRSEGSSLLPKLSIRSLDSIIEMNLVMDLNMKGVMLHKLVSVFEEEGAQVMSANLQNLNDRTFYTIIAQAIICRIGIDPSRIEERLRDIIS</sequence>
<feature type="chain" id="PRO_0000439396" description="Transcription factor bHLH168">
    <location>
        <begin position="1"/>
        <end position="174"/>
    </location>
</feature>
<feature type="domain" description="bHLH" evidence="1">
    <location>
        <begin position="14"/>
        <end position="63"/>
    </location>
</feature>
<protein>
    <recommendedName>
        <fullName evidence="2">Transcription factor bHLH168</fullName>
    </recommendedName>
    <alternativeName>
        <fullName evidence="2">Basic helix-loop-helix protein 168</fullName>
        <shortName evidence="2">AtbHLH168</shortName>
        <shortName evidence="2">bHLH 168</shortName>
    </alternativeName>
    <alternativeName>
        <fullName evidence="2">bHLH transcription factor bHLH168</fullName>
    </alternativeName>
</protein>
<proteinExistence type="inferred from homology"/>
<comment type="subcellular location">
    <subcellularLocation>
        <location evidence="1">Nucleus</location>
    </subcellularLocation>
</comment>
<comment type="alternative products">
    <event type="alternative splicing"/>
    <isoform>
        <id>Q9XIJ1-1</id>
        <name>1</name>
        <sequence type="displayed"/>
    </isoform>
    <text evidence="2">A number of isoforms are produced. According to EST sequences.</text>
</comment>
<comment type="similarity">
    <text evidence="2">Belongs to the bHLH protein family.</text>
</comment>
<accession>Q9XIJ1</accession>